<accession>Q9Y680</accession>
<accession>Q4ZG70</accession>
<accession>Q6V3B2</accession>
<accession>Q86U65</accession>
<accession>Q96DA4</accession>
<accession>Q9Y6B0</accession>
<gene>
    <name type="primary">FKBP7</name>
    <name type="synonym">FKBP23</name>
    <name type="ORF">UNQ670/PRO1304</name>
</gene>
<protein>
    <recommendedName>
        <fullName>Peptidyl-prolyl cis-trans isomerase FKBP7</fullName>
        <shortName>PPIase FKBP7</shortName>
        <ecNumber>5.2.1.8</ecNumber>
    </recommendedName>
    <alternativeName>
        <fullName>23 kDa FK506-binding protein</fullName>
        <shortName>23 kDa FKBP</shortName>
        <shortName>FKBP-23</shortName>
    </alternativeName>
    <alternativeName>
        <fullName>FK506-binding protein 7</fullName>
        <shortName>FKBP-7</shortName>
    </alternativeName>
    <alternativeName>
        <fullName>Rotamase</fullName>
    </alternativeName>
</protein>
<feature type="signal peptide" evidence="2">
    <location>
        <begin position="1"/>
        <end position="23"/>
    </location>
</feature>
<feature type="chain" id="PRO_0000025513" description="Peptidyl-prolyl cis-trans isomerase FKBP7">
    <location>
        <begin position="24"/>
        <end position="222"/>
    </location>
</feature>
<feature type="domain" description="PPIase FKBP-type" evidence="3">
    <location>
        <begin position="53"/>
        <end position="145"/>
    </location>
</feature>
<feature type="domain" description="EF-hand 1" evidence="4">
    <location>
        <begin position="145"/>
        <end position="180"/>
    </location>
</feature>
<feature type="domain" description="EF-hand 2" evidence="4">
    <location>
        <begin position="189"/>
        <end position="222"/>
    </location>
</feature>
<feature type="region of interest" description="Disordered" evidence="6">
    <location>
        <begin position="200"/>
        <end position="222"/>
    </location>
</feature>
<feature type="short sequence motif" description="Retention in the endoplasmic reticulum" evidence="5">
    <location>
        <begin position="219"/>
        <end position="222"/>
    </location>
</feature>
<feature type="binding site" evidence="4">
    <location>
        <position position="158"/>
    </location>
    <ligand>
        <name>Ca(2+)</name>
        <dbReference type="ChEBI" id="CHEBI:29108"/>
        <label>1</label>
    </ligand>
</feature>
<feature type="binding site" evidence="4">
    <location>
        <position position="160"/>
    </location>
    <ligand>
        <name>Ca(2+)</name>
        <dbReference type="ChEBI" id="CHEBI:29108"/>
        <label>1</label>
    </ligand>
</feature>
<feature type="binding site" evidence="4">
    <location>
        <position position="162"/>
    </location>
    <ligand>
        <name>Ca(2+)</name>
        <dbReference type="ChEBI" id="CHEBI:29108"/>
        <label>1</label>
    </ligand>
</feature>
<feature type="binding site" evidence="4">
    <location>
        <position position="164"/>
    </location>
    <ligand>
        <name>Ca(2+)</name>
        <dbReference type="ChEBI" id="CHEBI:29108"/>
        <label>1</label>
    </ligand>
</feature>
<feature type="binding site" evidence="4">
    <location>
        <position position="169"/>
    </location>
    <ligand>
        <name>Ca(2+)</name>
        <dbReference type="ChEBI" id="CHEBI:29108"/>
        <label>1</label>
    </ligand>
</feature>
<feature type="binding site" evidence="4">
    <location>
        <position position="202"/>
    </location>
    <ligand>
        <name>Ca(2+)</name>
        <dbReference type="ChEBI" id="CHEBI:29108"/>
        <label>2</label>
    </ligand>
</feature>
<feature type="binding site" evidence="4">
    <location>
        <position position="204"/>
    </location>
    <ligand>
        <name>Ca(2+)</name>
        <dbReference type="ChEBI" id="CHEBI:29108"/>
        <label>2</label>
    </ligand>
</feature>
<feature type="binding site" evidence="4">
    <location>
        <position position="206"/>
    </location>
    <ligand>
        <name>Ca(2+)</name>
        <dbReference type="ChEBI" id="CHEBI:29108"/>
        <label>2</label>
    </ligand>
</feature>
<feature type="binding site" evidence="4">
    <location>
        <position position="213"/>
    </location>
    <ligand>
        <name>Ca(2+)</name>
        <dbReference type="ChEBI" id="CHEBI:29108"/>
        <label>2</label>
    </ligand>
</feature>
<feature type="glycosylation site" description="N-linked (GlcNAc...) asparagine" evidence="2">
    <location>
        <position position="45"/>
    </location>
</feature>
<feature type="splice variant" id="VSP_059387" description="In isoform 1." evidence="7">
    <original>AEG</original>
    <variation>GST</variation>
    <location>
        <begin position="125"/>
        <end position="127"/>
    </location>
</feature>
<feature type="splice variant" id="VSP_041018" description="In isoform 3." evidence="8">
    <location>
        <position position="125"/>
    </location>
</feature>
<feature type="splice variant" id="VSP_059388" description="In isoform 1." evidence="7">
    <location>
        <begin position="128"/>
        <end position="222"/>
    </location>
</feature>
<feature type="sequence conflict" description="In Ref. 1; AAD40379." evidence="9" ref="1">
    <original>Y</original>
    <variation>H</variation>
    <location>
        <position position="124"/>
    </location>
</feature>
<feature type="sequence conflict" description="In Ref. 5; AAQ57208." evidence="9" ref="5">
    <original>K</original>
    <variation>M</variation>
    <location>
        <position position="200"/>
    </location>
</feature>
<proteinExistence type="evidence at protein level"/>
<reference key="1">
    <citation type="journal article" date="2000" name="Proc. Natl. Acad. Sci. U.S.A.">
        <title>Gene expression profiling in the human hypothalamus-pituitary-adrenal axis and full-length cDNA cloning.</title>
        <authorList>
            <person name="Hu R.-M."/>
            <person name="Han Z.-G."/>
            <person name="Song H.-D."/>
            <person name="Peng Y.-D."/>
            <person name="Huang Q.-H."/>
            <person name="Ren S.-X."/>
            <person name="Gu Y.-J."/>
            <person name="Huang C.-H."/>
            <person name="Li Y.-B."/>
            <person name="Jiang C.-L."/>
            <person name="Fu G."/>
            <person name="Zhang Q.-H."/>
            <person name="Gu B.-W."/>
            <person name="Dai M."/>
            <person name="Mao Y.-F."/>
            <person name="Gao G.-F."/>
            <person name="Rong R."/>
            <person name="Ye M."/>
            <person name="Zhou J."/>
            <person name="Xu S.-H."/>
            <person name="Gu J."/>
            <person name="Shi J.-X."/>
            <person name="Jin W.-R."/>
            <person name="Zhang C.-K."/>
            <person name="Wu T.-M."/>
            <person name="Huang G.-Y."/>
            <person name="Chen Z."/>
            <person name="Chen M.-D."/>
            <person name="Chen J.-L."/>
        </authorList>
    </citation>
    <scope>NUCLEOTIDE SEQUENCE [MRNA] (ISOFORMS 1 AND 2)</scope>
    <source>
        <tissue>Pituitary</tissue>
        <tissue>Pituitary tumor</tissue>
    </source>
</reference>
<reference key="2">
    <citation type="journal article" date="2003" name="Genome Res.">
        <title>The secreted protein discovery initiative (SPDI), a large-scale effort to identify novel human secreted and transmembrane proteins: a bioinformatics assessment.</title>
        <authorList>
            <person name="Clark H.F."/>
            <person name="Gurney A.L."/>
            <person name="Abaya E."/>
            <person name="Baker K."/>
            <person name="Baldwin D.T."/>
            <person name="Brush J."/>
            <person name="Chen J."/>
            <person name="Chow B."/>
            <person name="Chui C."/>
            <person name="Crowley C."/>
            <person name="Currell B."/>
            <person name="Deuel B."/>
            <person name="Dowd P."/>
            <person name="Eaton D."/>
            <person name="Foster J.S."/>
            <person name="Grimaldi C."/>
            <person name="Gu Q."/>
            <person name="Hass P.E."/>
            <person name="Heldens S."/>
            <person name="Huang A."/>
            <person name="Kim H.S."/>
            <person name="Klimowski L."/>
            <person name="Jin Y."/>
            <person name="Johnson S."/>
            <person name="Lee J."/>
            <person name="Lewis L."/>
            <person name="Liao D."/>
            <person name="Mark M.R."/>
            <person name="Robbie E."/>
            <person name="Sanchez C."/>
            <person name="Schoenfeld J."/>
            <person name="Seshagiri S."/>
            <person name="Simmons L."/>
            <person name="Singh J."/>
            <person name="Smith V."/>
            <person name="Stinson J."/>
            <person name="Vagts A."/>
            <person name="Vandlen R.L."/>
            <person name="Watanabe C."/>
            <person name="Wieand D."/>
            <person name="Woods K."/>
            <person name="Xie M.-H."/>
            <person name="Yansura D.G."/>
            <person name="Yi S."/>
            <person name="Yu G."/>
            <person name="Yuan J."/>
            <person name="Zhang M."/>
            <person name="Zhang Z."/>
            <person name="Goddard A.D."/>
            <person name="Wood W.I."/>
            <person name="Godowski P.J."/>
            <person name="Gray A.M."/>
        </authorList>
    </citation>
    <scope>NUCLEOTIDE SEQUENCE [LARGE SCALE MRNA] (ISOFORM 2)</scope>
</reference>
<reference key="3">
    <citation type="journal article" date="2004" name="Nat. Genet.">
        <title>Complete sequencing and characterization of 21,243 full-length human cDNAs.</title>
        <authorList>
            <person name="Ota T."/>
            <person name="Suzuki Y."/>
            <person name="Nishikawa T."/>
            <person name="Otsuki T."/>
            <person name="Sugiyama T."/>
            <person name="Irie R."/>
            <person name="Wakamatsu A."/>
            <person name="Hayashi K."/>
            <person name="Sato H."/>
            <person name="Nagai K."/>
            <person name="Kimura K."/>
            <person name="Makita H."/>
            <person name="Sekine M."/>
            <person name="Obayashi M."/>
            <person name="Nishi T."/>
            <person name="Shibahara T."/>
            <person name="Tanaka T."/>
            <person name="Ishii S."/>
            <person name="Yamamoto J."/>
            <person name="Saito K."/>
            <person name="Kawai Y."/>
            <person name="Isono Y."/>
            <person name="Nakamura Y."/>
            <person name="Nagahari K."/>
            <person name="Murakami K."/>
            <person name="Yasuda T."/>
            <person name="Iwayanagi T."/>
            <person name="Wagatsuma M."/>
            <person name="Shiratori A."/>
            <person name="Sudo H."/>
            <person name="Hosoiri T."/>
            <person name="Kaku Y."/>
            <person name="Kodaira H."/>
            <person name="Kondo H."/>
            <person name="Sugawara M."/>
            <person name="Takahashi M."/>
            <person name="Kanda K."/>
            <person name="Yokoi T."/>
            <person name="Furuya T."/>
            <person name="Kikkawa E."/>
            <person name="Omura Y."/>
            <person name="Abe K."/>
            <person name="Kamihara K."/>
            <person name="Katsuta N."/>
            <person name="Sato K."/>
            <person name="Tanikawa M."/>
            <person name="Yamazaki M."/>
            <person name="Ninomiya K."/>
            <person name="Ishibashi T."/>
            <person name="Yamashita H."/>
            <person name="Murakawa K."/>
            <person name="Fujimori K."/>
            <person name="Tanai H."/>
            <person name="Kimata M."/>
            <person name="Watanabe M."/>
            <person name="Hiraoka S."/>
            <person name="Chiba Y."/>
            <person name="Ishida S."/>
            <person name="Ono Y."/>
            <person name="Takiguchi S."/>
            <person name="Watanabe S."/>
            <person name="Yosida M."/>
            <person name="Hotuta T."/>
            <person name="Kusano J."/>
            <person name="Kanehori K."/>
            <person name="Takahashi-Fujii A."/>
            <person name="Hara H."/>
            <person name="Tanase T.-O."/>
            <person name="Nomura Y."/>
            <person name="Togiya S."/>
            <person name="Komai F."/>
            <person name="Hara R."/>
            <person name="Takeuchi K."/>
            <person name="Arita M."/>
            <person name="Imose N."/>
            <person name="Musashino K."/>
            <person name="Yuuki H."/>
            <person name="Oshima A."/>
            <person name="Sasaki N."/>
            <person name="Aotsuka S."/>
            <person name="Yoshikawa Y."/>
            <person name="Matsunawa H."/>
            <person name="Ichihara T."/>
            <person name="Shiohata N."/>
            <person name="Sano S."/>
            <person name="Moriya S."/>
            <person name="Momiyama H."/>
            <person name="Satoh N."/>
            <person name="Takami S."/>
            <person name="Terashima Y."/>
            <person name="Suzuki O."/>
            <person name="Nakagawa S."/>
            <person name="Senoh A."/>
            <person name="Mizoguchi H."/>
            <person name="Goto Y."/>
            <person name="Shimizu F."/>
            <person name="Wakebe H."/>
            <person name="Hishigaki H."/>
            <person name="Watanabe T."/>
            <person name="Sugiyama A."/>
            <person name="Takemoto M."/>
            <person name="Kawakami B."/>
            <person name="Yamazaki M."/>
            <person name="Watanabe K."/>
            <person name="Kumagai A."/>
            <person name="Itakura S."/>
            <person name="Fukuzumi Y."/>
            <person name="Fujimori Y."/>
            <person name="Komiyama M."/>
            <person name="Tashiro H."/>
            <person name="Tanigami A."/>
            <person name="Fujiwara T."/>
            <person name="Ono T."/>
            <person name="Yamada K."/>
            <person name="Fujii Y."/>
            <person name="Ozaki K."/>
            <person name="Hirao M."/>
            <person name="Ohmori Y."/>
            <person name="Kawabata A."/>
            <person name="Hikiji T."/>
            <person name="Kobatake N."/>
            <person name="Inagaki H."/>
            <person name="Ikema Y."/>
            <person name="Okamoto S."/>
            <person name="Okitani R."/>
            <person name="Kawakami T."/>
            <person name="Noguchi S."/>
            <person name="Itoh T."/>
            <person name="Shigeta K."/>
            <person name="Senba T."/>
            <person name="Matsumura K."/>
            <person name="Nakajima Y."/>
            <person name="Mizuno T."/>
            <person name="Morinaga M."/>
            <person name="Sasaki M."/>
            <person name="Togashi T."/>
            <person name="Oyama M."/>
            <person name="Hata H."/>
            <person name="Watanabe M."/>
            <person name="Komatsu T."/>
            <person name="Mizushima-Sugano J."/>
            <person name="Satoh T."/>
            <person name="Shirai Y."/>
            <person name="Takahashi Y."/>
            <person name="Nakagawa K."/>
            <person name="Okumura K."/>
            <person name="Nagase T."/>
            <person name="Nomura N."/>
            <person name="Kikuchi H."/>
            <person name="Masuho Y."/>
            <person name="Yamashita R."/>
            <person name="Nakai K."/>
            <person name="Yada T."/>
            <person name="Nakamura Y."/>
            <person name="Ohara O."/>
            <person name="Isogai T."/>
            <person name="Sugano S."/>
        </authorList>
    </citation>
    <scope>NUCLEOTIDE SEQUENCE [LARGE SCALE MRNA] (ISOFORM 2)</scope>
    <source>
        <tissue>Synovial cell</tissue>
    </source>
</reference>
<reference key="4">
    <citation type="submission" date="2003-05" db="EMBL/GenBank/DDBJ databases">
        <title>Cloning of human full-length CDSs in BD Creator(TM) system donor vector.</title>
        <authorList>
            <person name="Kalnine N."/>
            <person name="Chen X."/>
            <person name="Rolfs A."/>
            <person name="Halleck A."/>
            <person name="Hines L."/>
            <person name="Eisenstein S."/>
            <person name="Koundinya M."/>
            <person name="Raphael J."/>
            <person name="Moreira D."/>
            <person name="Kelley T."/>
            <person name="LaBaer J."/>
            <person name="Lin Y."/>
            <person name="Phelan M."/>
            <person name="Farmer A."/>
        </authorList>
    </citation>
    <scope>NUCLEOTIDE SEQUENCE [LARGE SCALE MRNA] (ISOFORM 2)</scope>
</reference>
<reference key="5">
    <citation type="submission" date="2003-07" db="EMBL/GenBank/DDBJ databases">
        <authorList>
            <person name="Li H."/>
            <person name="Zhong G."/>
            <person name="Yu R."/>
            <person name="Shen C."/>
            <person name="Zhou G."/>
            <person name="Li M."/>
            <person name="Xiao W."/>
            <person name="Lin L."/>
            <person name="Yang S."/>
        </authorList>
    </citation>
    <scope>NUCLEOTIDE SEQUENCE [LARGE SCALE MRNA] (ISOFORM 3)</scope>
</reference>
<reference key="6">
    <citation type="journal article" date="2005" name="Nature">
        <title>Generation and annotation of the DNA sequences of human chromosomes 2 and 4.</title>
        <authorList>
            <person name="Hillier L.W."/>
            <person name="Graves T.A."/>
            <person name="Fulton R.S."/>
            <person name="Fulton L.A."/>
            <person name="Pepin K.H."/>
            <person name="Minx P."/>
            <person name="Wagner-McPherson C."/>
            <person name="Layman D."/>
            <person name="Wylie K."/>
            <person name="Sekhon M."/>
            <person name="Becker M.C."/>
            <person name="Fewell G.A."/>
            <person name="Delehaunty K.D."/>
            <person name="Miner T.L."/>
            <person name="Nash W.E."/>
            <person name="Kremitzki C."/>
            <person name="Oddy L."/>
            <person name="Du H."/>
            <person name="Sun H."/>
            <person name="Bradshaw-Cordum H."/>
            <person name="Ali J."/>
            <person name="Carter J."/>
            <person name="Cordes M."/>
            <person name="Harris A."/>
            <person name="Isak A."/>
            <person name="van Brunt A."/>
            <person name="Nguyen C."/>
            <person name="Du F."/>
            <person name="Courtney L."/>
            <person name="Kalicki J."/>
            <person name="Ozersky P."/>
            <person name="Abbott S."/>
            <person name="Armstrong J."/>
            <person name="Belter E.A."/>
            <person name="Caruso L."/>
            <person name="Cedroni M."/>
            <person name="Cotton M."/>
            <person name="Davidson T."/>
            <person name="Desai A."/>
            <person name="Elliott G."/>
            <person name="Erb T."/>
            <person name="Fronick C."/>
            <person name="Gaige T."/>
            <person name="Haakenson W."/>
            <person name="Haglund K."/>
            <person name="Holmes A."/>
            <person name="Harkins R."/>
            <person name="Kim K."/>
            <person name="Kruchowski S.S."/>
            <person name="Strong C.M."/>
            <person name="Grewal N."/>
            <person name="Goyea E."/>
            <person name="Hou S."/>
            <person name="Levy A."/>
            <person name="Martinka S."/>
            <person name="Mead K."/>
            <person name="McLellan M.D."/>
            <person name="Meyer R."/>
            <person name="Randall-Maher J."/>
            <person name="Tomlinson C."/>
            <person name="Dauphin-Kohlberg S."/>
            <person name="Kozlowicz-Reilly A."/>
            <person name="Shah N."/>
            <person name="Swearengen-Shahid S."/>
            <person name="Snider J."/>
            <person name="Strong J.T."/>
            <person name="Thompson J."/>
            <person name="Yoakum M."/>
            <person name="Leonard S."/>
            <person name="Pearman C."/>
            <person name="Trani L."/>
            <person name="Radionenko M."/>
            <person name="Waligorski J.E."/>
            <person name="Wang C."/>
            <person name="Rock S.M."/>
            <person name="Tin-Wollam A.-M."/>
            <person name="Maupin R."/>
            <person name="Latreille P."/>
            <person name="Wendl M.C."/>
            <person name="Yang S.-P."/>
            <person name="Pohl C."/>
            <person name="Wallis J.W."/>
            <person name="Spieth J."/>
            <person name="Bieri T.A."/>
            <person name="Berkowicz N."/>
            <person name="Nelson J.O."/>
            <person name="Osborne J."/>
            <person name="Ding L."/>
            <person name="Meyer R."/>
            <person name="Sabo A."/>
            <person name="Shotland Y."/>
            <person name="Sinha P."/>
            <person name="Wohldmann P.E."/>
            <person name="Cook L.L."/>
            <person name="Hickenbotham M.T."/>
            <person name="Eldred J."/>
            <person name="Williams D."/>
            <person name="Jones T.A."/>
            <person name="She X."/>
            <person name="Ciccarelli F.D."/>
            <person name="Izaurralde E."/>
            <person name="Taylor J."/>
            <person name="Schmutz J."/>
            <person name="Myers R.M."/>
            <person name="Cox D.R."/>
            <person name="Huang X."/>
            <person name="McPherson J.D."/>
            <person name="Mardis E.R."/>
            <person name="Clifton S.W."/>
            <person name="Warren W.C."/>
            <person name="Chinwalla A.T."/>
            <person name="Eddy S.R."/>
            <person name="Marra M.A."/>
            <person name="Ovcharenko I."/>
            <person name="Furey T.S."/>
            <person name="Miller W."/>
            <person name="Eichler E.E."/>
            <person name="Bork P."/>
            <person name="Suyama M."/>
            <person name="Torrents D."/>
            <person name="Waterston R.H."/>
            <person name="Wilson R.K."/>
        </authorList>
    </citation>
    <scope>NUCLEOTIDE SEQUENCE [LARGE SCALE GENOMIC DNA]</scope>
</reference>
<reference key="7">
    <citation type="journal article" date="2004" name="Genome Res.">
        <title>The status, quality, and expansion of the NIH full-length cDNA project: the Mammalian Gene Collection (MGC).</title>
        <authorList>
            <consortium name="The MGC Project Team"/>
        </authorList>
    </citation>
    <scope>NUCLEOTIDE SEQUENCE [LARGE SCALE MRNA] (ISOFORM 2)</scope>
    <source>
        <tissue>Lung</tissue>
    </source>
</reference>
<reference key="8">
    <citation type="journal article" date="2011" name="BMC Syst. Biol.">
        <title>Initial characterization of the human central proteome.</title>
        <authorList>
            <person name="Burkard T.R."/>
            <person name="Planyavsky M."/>
            <person name="Kaupe I."/>
            <person name="Breitwieser F.P."/>
            <person name="Buerckstuemmer T."/>
            <person name="Bennett K.L."/>
            <person name="Superti-Furga G."/>
            <person name="Colinge J."/>
        </authorList>
    </citation>
    <scope>IDENTIFICATION BY MASS SPECTROMETRY [LARGE SCALE ANALYSIS]</scope>
</reference>
<reference key="9">
    <citation type="journal article" date="2015" name="Proteomics">
        <title>N-terminome analysis of the human mitochondrial proteome.</title>
        <authorList>
            <person name="Vaca Jacome A.S."/>
            <person name="Rabilloud T."/>
            <person name="Schaeffer-Reiss C."/>
            <person name="Rompais M."/>
            <person name="Ayoub D."/>
            <person name="Lane L."/>
            <person name="Bairoch A."/>
            <person name="Van Dorsselaer A."/>
            <person name="Carapito C."/>
        </authorList>
    </citation>
    <scope>IDENTIFICATION BY MASS SPECTROMETRY [LARGE SCALE ANALYSIS]</scope>
</reference>
<dbReference type="EC" id="5.2.1.8"/>
<dbReference type="EMBL" id="AF092137">
    <property type="protein sequence ID" value="AAD40379.1"/>
    <property type="molecule type" value="mRNA"/>
</dbReference>
<dbReference type="EMBL" id="AF100751">
    <property type="protein sequence ID" value="AAD43015.1"/>
    <property type="status" value="ALT_FRAME"/>
    <property type="molecule type" value="mRNA"/>
</dbReference>
<dbReference type="EMBL" id="AY359015">
    <property type="protein sequence ID" value="AAQ89374.1"/>
    <property type="molecule type" value="mRNA"/>
</dbReference>
<dbReference type="EMBL" id="AK292145">
    <property type="protein sequence ID" value="BAF84834.1"/>
    <property type="molecule type" value="mRNA"/>
</dbReference>
<dbReference type="EMBL" id="BT007122">
    <property type="protein sequence ID" value="AAP35786.1"/>
    <property type="molecule type" value="mRNA"/>
</dbReference>
<dbReference type="EMBL" id="AY353086">
    <property type="protein sequence ID" value="AAQ57208.1"/>
    <property type="molecule type" value="mRNA"/>
</dbReference>
<dbReference type="EMBL" id="AC009948">
    <property type="protein sequence ID" value="AAX88883.1"/>
    <property type="molecule type" value="Genomic_DNA"/>
</dbReference>
<dbReference type="EMBL" id="BC009711">
    <property type="protein sequence ID" value="AAH09711.1"/>
    <property type="molecule type" value="mRNA"/>
</dbReference>
<dbReference type="CCDS" id="CCDS2280.1">
    <molecule id="Q9Y680-2"/>
</dbReference>
<dbReference type="CCDS" id="CCDS46462.1">
    <molecule id="Q9Y680-3"/>
</dbReference>
<dbReference type="RefSeq" id="NP_001128684.1">
    <molecule id="Q9Y680-3"/>
    <property type="nucleotide sequence ID" value="NM_001135212.2"/>
</dbReference>
<dbReference type="RefSeq" id="NP_851939.1">
    <molecule id="Q9Y680-2"/>
    <property type="nucleotide sequence ID" value="NM_181342.3"/>
</dbReference>
<dbReference type="SMR" id="Q9Y680"/>
<dbReference type="BioGRID" id="119666">
    <property type="interactions" value="146"/>
</dbReference>
<dbReference type="FunCoup" id="Q9Y680">
    <property type="interactions" value="593"/>
</dbReference>
<dbReference type="IntAct" id="Q9Y680">
    <property type="interactions" value="99"/>
</dbReference>
<dbReference type="MINT" id="Q9Y680"/>
<dbReference type="STRING" id="9606.ENSP00000413152"/>
<dbReference type="GlyCosmos" id="Q9Y680">
    <property type="glycosylation" value="1 site, No reported glycans"/>
</dbReference>
<dbReference type="GlyGen" id="Q9Y680">
    <property type="glycosylation" value="2 sites, 8 N-linked glycans (1 site), 1 O-linked glycan (1 site)"/>
</dbReference>
<dbReference type="iPTMnet" id="Q9Y680"/>
<dbReference type="MetOSite" id="Q9Y680"/>
<dbReference type="PhosphoSitePlus" id="Q9Y680"/>
<dbReference type="BioMuta" id="FKBP7"/>
<dbReference type="DMDM" id="23396602"/>
<dbReference type="jPOST" id="Q9Y680"/>
<dbReference type="MassIVE" id="Q9Y680"/>
<dbReference type="PaxDb" id="9606-ENSP00000413152"/>
<dbReference type="PeptideAtlas" id="Q9Y680"/>
<dbReference type="ProteomicsDB" id="86619">
    <molecule id="Q9Y680-1"/>
</dbReference>
<dbReference type="ProteomicsDB" id="86620">
    <molecule id="Q9Y680-2"/>
</dbReference>
<dbReference type="ProteomicsDB" id="86621">
    <molecule id="Q9Y680-3"/>
</dbReference>
<dbReference type="Pumba" id="Q9Y680"/>
<dbReference type="Antibodypedia" id="2249">
    <property type="antibodies" value="167 antibodies from 25 providers"/>
</dbReference>
<dbReference type="DNASU" id="51661"/>
<dbReference type="Ensembl" id="ENST00000233092.10">
    <molecule id="Q9Y680-1"/>
    <property type="protein sequence ID" value="ENSP00000233092.6"/>
    <property type="gene ID" value="ENSG00000079150.19"/>
</dbReference>
<dbReference type="Ensembl" id="ENST00000424785.7">
    <molecule id="Q9Y680-2"/>
    <property type="protein sequence ID" value="ENSP00000413152.2"/>
    <property type="gene ID" value="ENSG00000079150.19"/>
</dbReference>
<dbReference type="Ensembl" id="ENST00000434643.6">
    <molecule id="Q9Y680-3"/>
    <property type="protein sequence ID" value="ENSP00000415486.2"/>
    <property type="gene ID" value="ENSG00000079150.19"/>
</dbReference>
<dbReference type="Ensembl" id="ENST00000470945.2">
    <molecule id="Q9Y680-1"/>
    <property type="protein sequence ID" value="ENSP00000510163.1"/>
    <property type="gene ID" value="ENSG00000079150.19"/>
</dbReference>
<dbReference type="GeneID" id="51661"/>
<dbReference type="KEGG" id="hsa:51661"/>
<dbReference type="MANE-Select" id="ENST00000424785.7">
    <property type="protein sequence ID" value="ENSP00000413152.2"/>
    <property type="RefSeq nucleotide sequence ID" value="NM_181342.3"/>
    <property type="RefSeq protein sequence ID" value="NP_851939.1"/>
</dbReference>
<dbReference type="UCSC" id="uc002umk.4">
    <molecule id="Q9Y680-2"/>
    <property type="organism name" value="human"/>
</dbReference>
<dbReference type="AGR" id="HGNC:3723"/>
<dbReference type="CTD" id="51661"/>
<dbReference type="DisGeNET" id="51661"/>
<dbReference type="GeneCards" id="FKBP7"/>
<dbReference type="HGNC" id="HGNC:3723">
    <property type="gene designation" value="FKBP7"/>
</dbReference>
<dbReference type="HPA" id="ENSG00000079150">
    <property type="expression patterns" value="Tissue enhanced (ovary)"/>
</dbReference>
<dbReference type="MIM" id="607062">
    <property type="type" value="gene"/>
</dbReference>
<dbReference type="neXtProt" id="NX_Q9Y680"/>
<dbReference type="OpenTargets" id="ENSG00000079150"/>
<dbReference type="PharmGKB" id="PA28164"/>
<dbReference type="VEuPathDB" id="HostDB:ENSG00000079150"/>
<dbReference type="GeneTree" id="ENSGT00940000159964"/>
<dbReference type="HOGENOM" id="CLU_013615_5_0_1"/>
<dbReference type="InParanoid" id="Q9Y680"/>
<dbReference type="OMA" id="FFYVWGI"/>
<dbReference type="OrthoDB" id="1902587at2759"/>
<dbReference type="PAN-GO" id="Q9Y680">
    <property type="GO annotations" value="0 GO annotations based on evolutionary models"/>
</dbReference>
<dbReference type="PhylomeDB" id="Q9Y680"/>
<dbReference type="TreeFam" id="TF105296"/>
<dbReference type="PathwayCommons" id="Q9Y680"/>
<dbReference type="SignaLink" id="Q9Y680"/>
<dbReference type="BioGRID-ORCS" id="51661">
    <property type="hits" value="6 hits in 1162 CRISPR screens"/>
</dbReference>
<dbReference type="ChiTaRS" id="FKBP7">
    <property type="organism name" value="human"/>
</dbReference>
<dbReference type="GenomeRNAi" id="51661"/>
<dbReference type="Pharos" id="Q9Y680">
    <property type="development level" value="Tbio"/>
</dbReference>
<dbReference type="PRO" id="PR:Q9Y680"/>
<dbReference type="Proteomes" id="UP000005640">
    <property type="component" value="Chromosome 2"/>
</dbReference>
<dbReference type="RNAct" id="Q9Y680">
    <property type="molecule type" value="protein"/>
</dbReference>
<dbReference type="Bgee" id="ENSG00000079150">
    <property type="expression patterns" value="Expressed in stromal cell of endometrium and 158 other cell types or tissues"/>
</dbReference>
<dbReference type="ExpressionAtlas" id="Q9Y680">
    <property type="expression patterns" value="baseline and differential"/>
</dbReference>
<dbReference type="GO" id="GO:0005783">
    <property type="term" value="C:endoplasmic reticulum"/>
    <property type="evidence" value="ECO:0000250"/>
    <property type="project" value="FlyBase"/>
</dbReference>
<dbReference type="GO" id="GO:0005788">
    <property type="term" value="C:endoplasmic reticulum lumen"/>
    <property type="evidence" value="ECO:0007669"/>
    <property type="project" value="UniProtKB-SubCell"/>
</dbReference>
<dbReference type="GO" id="GO:0005509">
    <property type="term" value="F:calcium ion binding"/>
    <property type="evidence" value="ECO:0007669"/>
    <property type="project" value="Ensembl"/>
</dbReference>
<dbReference type="GO" id="GO:0005528">
    <property type="term" value="F:FK506 binding"/>
    <property type="evidence" value="ECO:0000250"/>
    <property type="project" value="FlyBase"/>
</dbReference>
<dbReference type="GO" id="GO:0003755">
    <property type="term" value="F:peptidyl-prolyl cis-trans isomerase activity"/>
    <property type="evidence" value="ECO:0000250"/>
    <property type="project" value="FlyBase"/>
</dbReference>
<dbReference type="FunFam" id="3.10.50.40:FF:000006">
    <property type="entry name" value="Peptidyl-prolyl cis-trans isomerase"/>
    <property type="match status" value="1"/>
</dbReference>
<dbReference type="Gene3D" id="3.10.50.40">
    <property type="match status" value="1"/>
</dbReference>
<dbReference type="Gene3D" id="1.10.238.10">
    <property type="entry name" value="EF-hand"/>
    <property type="match status" value="1"/>
</dbReference>
<dbReference type="InterPro" id="IPR011992">
    <property type="entry name" value="EF-hand-dom_pair"/>
</dbReference>
<dbReference type="InterPro" id="IPR018247">
    <property type="entry name" value="EF_Hand_1_Ca_BS"/>
</dbReference>
<dbReference type="InterPro" id="IPR002048">
    <property type="entry name" value="EF_hand_dom"/>
</dbReference>
<dbReference type="InterPro" id="IPR046357">
    <property type="entry name" value="PPIase_dom_sf"/>
</dbReference>
<dbReference type="InterPro" id="IPR052273">
    <property type="entry name" value="PPIase_FKBP"/>
</dbReference>
<dbReference type="InterPro" id="IPR001179">
    <property type="entry name" value="PPIase_FKBP_dom"/>
</dbReference>
<dbReference type="PANTHER" id="PTHR46222:SF2">
    <property type="entry name" value="PEPTIDYL-PROLYL CIS-TRANS ISOMERASE FKBP7"/>
    <property type="match status" value="1"/>
</dbReference>
<dbReference type="PANTHER" id="PTHR46222">
    <property type="entry name" value="PEPTIDYL-PROLYL CIS-TRANS ISOMERASE FKBP7/14"/>
    <property type="match status" value="1"/>
</dbReference>
<dbReference type="Pfam" id="PF13202">
    <property type="entry name" value="EF-hand_5"/>
    <property type="match status" value="1"/>
</dbReference>
<dbReference type="Pfam" id="PF00254">
    <property type="entry name" value="FKBP_C"/>
    <property type="match status" value="1"/>
</dbReference>
<dbReference type="SUPFAM" id="SSF47473">
    <property type="entry name" value="EF-hand"/>
    <property type="match status" value="1"/>
</dbReference>
<dbReference type="SUPFAM" id="SSF54534">
    <property type="entry name" value="FKBP-like"/>
    <property type="match status" value="1"/>
</dbReference>
<dbReference type="PROSITE" id="PS00018">
    <property type="entry name" value="EF_HAND_1"/>
    <property type="match status" value="2"/>
</dbReference>
<dbReference type="PROSITE" id="PS50222">
    <property type="entry name" value="EF_HAND_2"/>
    <property type="match status" value="2"/>
</dbReference>
<dbReference type="PROSITE" id="PS00014">
    <property type="entry name" value="ER_TARGET"/>
    <property type="match status" value="1"/>
</dbReference>
<dbReference type="PROSITE" id="PS50059">
    <property type="entry name" value="FKBP_PPIASE"/>
    <property type="match status" value="1"/>
</dbReference>
<comment type="function">
    <text>PPIases accelerate the folding of proteins during protein synthesis.</text>
</comment>
<comment type="catalytic activity">
    <reaction>
        <text>[protein]-peptidylproline (omega=180) = [protein]-peptidylproline (omega=0)</text>
        <dbReference type="Rhea" id="RHEA:16237"/>
        <dbReference type="Rhea" id="RHEA-COMP:10747"/>
        <dbReference type="Rhea" id="RHEA-COMP:10748"/>
        <dbReference type="ChEBI" id="CHEBI:83833"/>
        <dbReference type="ChEBI" id="CHEBI:83834"/>
        <dbReference type="EC" id="5.2.1.8"/>
    </reaction>
</comment>
<comment type="interaction">
    <interactant intactId="EBI-3918971">
        <id>Q9Y680</id>
    </interactant>
    <interactant intactId="EBI-348517">
        <id>O95870</id>
        <label>ABHD16A</label>
    </interactant>
    <organismsDiffer>false</organismsDiffer>
    <experiments>3</experiments>
</comment>
<comment type="interaction">
    <interactant intactId="EBI-3918971">
        <id>Q9Y680</id>
    </interactant>
    <interactant intactId="EBI-10827839">
        <id>Q15848</id>
        <label>ADIPOQ</label>
    </interactant>
    <organismsDiffer>false</organismsDiffer>
    <experiments>3</experiments>
</comment>
<comment type="interaction">
    <interactant intactId="EBI-3918971">
        <id>Q9Y680</id>
    </interactant>
    <interactant intactId="EBI-541426">
        <id>Q9BXS5</id>
        <label>AP1M1</label>
    </interactant>
    <organismsDiffer>false</organismsDiffer>
    <experiments>3</experiments>
</comment>
<comment type="interaction">
    <interactant intactId="EBI-3918971">
        <id>Q9Y680</id>
    </interactant>
    <interactant intactId="EBI-715495">
        <id>P05090</id>
        <label>APOD</label>
    </interactant>
    <organismsDiffer>false</organismsDiffer>
    <experiments>3</experiments>
</comment>
<comment type="interaction">
    <interactant intactId="EBI-3918971">
        <id>Q9Y680</id>
    </interactant>
    <interactant intactId="EBI-12092171">
        <id>Q12797-6</id>
        <label>ASPH</label>
    </interactant>
    <organismsDiffer>false</organismsDiffer>
    <experiments>3</experiments>
</comment>
<comment type="interaction">
    <interactant intactId="EBI-3918971">
        <id>Q9Y680</id>
    </interactant>
    <interactant intactId="EBI-3922513">
        <id>O95393</id>
        <label>BMP10</label>
    </interactant>
    <organismsDiffer>false</organismsDiffer>
    <experiments>3</experiments>
</comment>
<comment type="interaction">
    <interactant intactId="EBI-3918971">
        <id>Q9Y680</id>
    </interactant>
    <interactant intactId="EBI-12244618">
        <id>Q6PL45-2</id>
        <label>BRICD5</label>
    </interactant>
    <organismsDiffer>false</organismsDiffer>
    <experiments>3</experiments>
</comment>
<comment type="interaction">
    <interactant intactId="EBI-3918971">
        <id>Q9Y680</id>
    </interactant>
    <interactant intactId="EBI-358858">
        <id>O14735</id>
        <label>CDIPT</label>
    </interactant>
    <organismsDiffer>false</organismsDiffer>
    <experiments>3</experiments>
</comment>
<comment type="interaction">
    <interactant intactId="EBI-3918971">
        <id>Q9Y680</id>
    </interactant>
    <interactant intactId="EBI-12261896">
        <id>Q5T4B2</id>
        <label>CERCAM</label>
    </interactant>
    <organismsDiffer>false</organismsDiffer>
    <experiments>3</experiments>
</comment>
<comment type="interaction">
    <interactant intactId="EBI-3918971">
        <id>Q9Y680</id>
    </interactant>
    <interactant intactId="EBI-752069">
        <id>Q9H5X1</id>
        <label>CIAO2A</label>
    </interactant>
    <organismsDiffer>false</organismsDiffer>
    <experiments>3</experiments>
</comment>
<comment type="interaction">
    <interactant intactId="EBI-3918971">
        <id>Q9Y680</id>
    </interactant>
    <interactant intactId="EBI-12256978">
        <id>Q8N6F1-2</id>
        <label>CLDN19</label>
    </interactant>
    <organismsDiffer>false</organismsDiffer>
    <experiments>3</experiments>
</comment>
<comment type="interaction">
    <interactant intactId="EBI-3918971">
        <id>Q9Y680</id>
    </interactant>
    <interactant intactId="EBI-517508">
        <id>Q9NR28</id>
        <label>DIABLO</label>
    </interactant>
    <organismsDiffer>false</organismsDiffer>
    <experiments>3</experiments>
</comment>
<comment type="interaction">
    <interactant intactId="EBI-3918971">
        <id>Q9Y680</id>
    </interactant>
    <interactant intactId="EBI-2876774">
        <id>Q92520</id>
        <label>FAM3C</label>
    </interactant>
    <organismsDiffer>false</organismsDiffer>
    <experiments>3</experiments>
</comment>
<comment type="interaction">
    <interactant intactId="EBI-3918971">
        <id>Q9Y680</id>
    </interactant>
    <interactant intactId="EBI-2513774">
        <id>O95363</id>
        <label>FARS2</label>
    </interactant>
    <organismsDiffer>false</organismsDiffer>
    <experiments>3</experiments>
</comment>
<comment type="interaction">
    <interactant intactId="EBI-3918971">
        <id>Q9Y680</id>
    </interactant>
    <interactant intactId="EBI-2515857">
        <id>O43681</id>
        <label>GET3</label>
    </interactant>
    <organismsDiffer>false</organismsDiffer>
    <experiments>3</experiments>
</comment>
<comment type="interaction">
    <interactant intactId="EBI-3918971">
        <id>Q9Y680</id>
    </interactant>
    <interactant intactId="EBI-10294329">
        <id>Q99525</id>
        <label>H4C7</label>
    </interactant>
    <organismsDiffer>false</organismsDiffer>
    <experiments>3</experiments>
</comment>
<comment type="interaction">
    <interactant intactId="EBI-3918971">
        <id>Q9Y680</id>
    </interactant>
    <interactant intactId="EBI-5916693">
        <id>Q9HCP6</id>
        <label>HHATL</label>
    </interactant>
    <organismsDiffer>false</organismsDiffer>
    <experiments>3</experiments>
</comment>
<comment type="interaction">
    <interactant intactId="EBI-3918971">
        <id>Q9Y680</id>
    </interactant>
    <interactant intactId="EBI-2685549">
        <id>C9JCN9</id>
        <label>HSBP1L1</label>
    </interactant>
    <organismsDiffer>false</organismsDiffer>
    <experiments>3</experiments>
</comment>
<comment type="interaction">
    <interactant intactId="EBI-3918971">
        <id>Q9Y680</id>
    </interactant>
    <interactant intactId="EBI-1748945">
        <id>P46695</id>
        <label>IER3</label>
    </interactant>
    <organismsDiffer>false</organismsDiffer>
    <experiments>3</experiments>
</comment>
<comment type="interaction">
    <interactant intactId="EBI-3918971">
        <id>Q9Y680</id>
    </interactant>
    <interactant intactId="EBI-7932862">
        <id>Q01628</id>
        <label>IFITM3</label>
    </interactant>
    <organismsDiffer>false</organismsDiffer>
    <experiments>3</experiments>
</comment>
<comment type="interaction">
    <interactant intactId="EBI-3918971">
        <id>Q9Y680</id>
    </interactant>
    <interactant intactId="EBI-12205593">
        <id>Q8TAC2</id>
        <label>JOSD2</label>
    </interactant>
    <organismsDiffer>false</organismsDiffer>
    <experiments>3</experiments>
</comment>
<comment type="interaction">
    <interactant intactId="EBI-3918971">
        <id>Q9Y680</id>
    </interactant>
    <interactant intactId="EBI-8070286">
        <id>O43561-2</id>
        <label>LAT</label>
    </interactant>
    <organismsDiffer>false</organismsDiffer>
    <experiments>3</experiments>
</comment>
<comment type="interaction">
    <interactant intactId="EBI-3918971">
        <id>Q9Y680</id>
    </interactant>
    <interactant intactId="EBI-12243024">
        <id>Q9Y2E5</id>
        <label>MAN2B2</label>
    </interactant>
    <organismsDiffer>false</organismsDiffer>
    <experiments>3</experiments>
</comment>
<comment type="interaction">
    <interactant intactId="EBI-3918971">
        <id>Q9Y680</id>
    </interactant>
    <interactant intactId="EBI-11988931">
        <id>Q96C03-3</id>
        <label>MIEF2</label>
    </interactant>
    <organismsDiffer>false</organismsDiffer>
    <experiments>3</experiments>
</comment>
<comment type="interaction">
    <interactant intactId="EBI-3918971">
        <id>Q9Y680</id>
    </interactant>
    <interactant intactId="EBI-5454865">
        <id>Q6IN84</id>
        <label>MRM1</label>
    </interactant>
    <organismsDiffer>false</organismsDiffer>
    <experiments>3</experiments>
</comment>
<comment type="interaction">
    <interactant intactId="EBI-3918971">
        <id>Q9Y680</id>
    </interactant>
    <interactant intactId="EBI-725252">
        <id>Q9UMS0</id>
        <label>NFU1</label>
    </interactant>
    <organismsDiffer>false</organismsDiffer>
    <experiments>3</experiments>
</comment>
<comment type="interaction">
    <interactant intactId="EBI-3918971">
        <id>Q9Y680</id>
    </interactant>
    <interactant intactId="EBI-18076879">
        <id>Q9Y5X5-3</id>
        <label>NPFFR2</label>
    </interactant>
    <organismsDiffer>false</organismsDiffer>
    <experiments>3</experiments>
</comment>
<comment type="interaction">
    <interactant intactId="EBI-3918971">
        <id>Q9Y680</id>
    </interactant>
    <interactant intactId="EBI-2683029">
        <id>Q9NX40</id>
        <label>OCIAD1</label>
    </interactant>
    <organismsDiffer>false</organismsDiffer>
    <experiments>3</experiments>
</comment>
<comment type="interaction">
    <interactant intactId="EBI-3918971">
        <id>Q9Y680</id>
    </interactant>
    <interactant intactId="EBI-2862111">
        <id>Q96HP4</id>
        <label>OXNAD1</label>
    </interactant>
    <organismsDiffer>false</organismsDiffer>
    <experiments>3</experiments>
</comment>
<comment type="interaction">
    <interactant intactId="EBI-3918971">
        <id>Q9Y680</id>
    </interactant>
    <interactant intactId="EBI-741171">
        <id>Q96AL5</id>
        <label>PBX3</label>
    </interactant>
    <organismsDiffer>false</organismsDiffer>
    <experiments>3</experiments>
</comment>
<comment type="interaction">
    <interactant intactId="EBI-3918971">
        <id>Q9Y680</id>
    </interactant>
    <interactant intactId="EBI-2563309">
        <id>P49585</id>
        <label>PCYT1A</label>
    </interactant>
    <organismsDiffer>false</organismsDiffer>
    <experiments>3</experiments>
</comment>
<comment type="interaction">
    <interactant intactId="EBI-3918971">
        <id>Q9Y680</id>
    </interactant>
    <interactant intactId="EBI-594747">
        <id>P40855</id>
        <label>PEX19</label>
    </interactant>
    <organismsDiffer>false</organismsDiffer>
    <experiments>3</experiments>
</comment>
<comment type="interaction">
    <interactant intactId="EBI-3918971">
        <id>Q9Y680</id>
    </interactant>
    <interactant intactId="EBI-11721828">
        <id>Q8IY26</id>
        <label>PLPP6</label>
    </interactant>
    <organismsDiffer>false</organismsDiffer>
    <experiments>3</experiments>
</comment>
<comment type="interaction">
    <interactant intactId="EBI-3918971">
        <id>Q9Y680</id>
    </interactant>
    <interactant intactId="EBI-14210385">
        <id>Q59EV6</id>
        <label>PPGB</label>
    </interactant>
    <organismsDiffer>false</organismsDiffer>
    <experiments>3</experiments>
</comment>
<comment type="interaction">
    <interactant intactId="EBI-3918971">
        <id>Q9Y680</id>
    </interactant>
    <interactant intactId="EBI-5544229">
        <id>P30405</id>
        <label>PPIF</label>
    </interactant>
    <organismsDiffer>false</organismsDiffer>
    <experiments>3</experiments>
</comment>
<comment type="interaction">
    <interactant intactId="EBI-3918971">
        <id>Q9Y680</id>
    </interactant>
    <interactant intactId="EBI-2560233">
        <id>O75127</id>
        <label>PTCD1</label>
    </interactant>
    <organismsDiffer>false</organismsDiffer>
    <experiments>3</experiments>
</comment>
<comment type="interaction">
    <interactant intactId="EBI-3918971">
        <id>Q9Y680</id>
    </interactant>
    <interactant intactId="EBI-742898">
        <id>P43378</id>
        <label>PTPN9</label>
    </interactant>
    <organismsDiffer>false</organismsDiffer>
    <experiments>3</experiments>
</comment>
<comment type="interaction">
    <interactant intactId="EBI-3918971">
        <id>Q9Y680</id>
    </interactant>
    <interactant intactId="EBI-3232108">
        <id>Q8N0V3</id>
        <label>RBFA</label>
    </interactant>
    <organismsDiffer>false</organismsDiffer>
    <experiments>3</experiments>
</comment>
<comment type="interaction">
    <interactant intactId="EBI-3918971">
        <id>Q9Y680</id>
    </interactant>
    <interactant intactId="EBI-1052363">
        <id>Q9NS64</id>
        <label>RPRM</label>
    </interactant>
    <organismsDiffer>false</organismsDiffer>
    <experiments>3</experiments>
</comment>
<comment type="interaction">
    <interactant intactId="EBI-3918971">
        <id>Q9Y680</id>
    </interactant>
    <interactant intactId="EBI-8636004">
        <id>Q96GQ5</id>
        <label>RUSF1</label>
    </interactant>
    <organismsDiffer>false</organismsDiffer>
    <experiments>3</experiments>
</comment>
<comment type="interaction">
    <interactant intactId="EBI-3918971">
        <id>Q9Y680</id>
    </interactant>
    <interactant intactId="EBI-347996">
        <id>O43765</id>
        <label>SGTA</label>
    </interactant>
    <organismsDiffer>false</organismsDiffer>
    <experiments>6</experiments>
</comment>
<comment type="interaction">
    <interactant intactId="EBI-3918971">
        <id>Q9Y680</id>
    </interactant>
    <interactant intactId="EBI-10314552">
        <id>Q9NVC3</id>
        <label>SLC38A7</label>
    </interactant>
    <organismsDiffer>false</organismsDiffer>
    <experiments>3</experiments>
</comment>
<comment type="interaction">
    <interactant intactId="EBI-3918971">
        <id>Q9Y680</id>
    </interactant>
    <interactant intactId="EBI-5235586">
        <id>Q8TBB6</id>
        <label>SLC7A14</label>
    </interactant>
    <organismsDiffer>false</organismsDiffer>
    <experiments>3</experiments>
</comment>
<comment type="interaction">
    <interactant intactId="EBI-3918971">
        <id>Q9Y680</id>
    </interactant>
    <interactant intactId="EBI-2822329">
        <id>Q13596</id>
        <label>SNX1</label>
    </interactant>
    <organismsDiffer>false</organismsDiffer>
    <experiments>3</experiments>
</comment>
<comment type="interaction">
    <interactant intactId="EBI-3918971">
        <id>Q9Y680</id>
    </interactant>
    <interactant intactId="EBI-22419305">
        <id>Q9UMY4-1</id>
        <label>SNX12</label>
    </interactant>
    <organismsDiffer>false</organismsDiffer>
    <experiments>3</experiments>
</comment>
<comment type="interaction">
    <interactant intactId="EBI-3918971">
        <id>Q9Y680</id>
    </interactant>
    <interactant intactId="EBI-3221827">
        <id>O15400</id>
        <label>STX7</label>
    </interactant>
    <organismsDiffer>false</organismsDiffer>
    <experiments>3</experiments>
</comment>
<comment type="interaction">
    <interactant intactId="EBI-3918971">
        <id>Q9Y680</id>
    </interactant>
    <interactant intactId="EBI-727240">
        <id>Q9UNK0</id>
        <label>STX8</label>
    </interactant>
    <organismsDiffer>false</organismsDiffer>
    <experiments>3</experiments>
</comment>
<comment type="interaction">
    <interactant intactId="EBI-3918971">
        <id>Q9Y680</id>
    </interactant>
    <interactant intactId="EBI-2269898">
        <id>Q9P2R7</id>
        <label>SUCLA2</label>
    </interactant>
    <organismsDiffer>false</organismsDiffer>
    <experiments>3</experiments>
</comment>
<comment type="interaction">
    <interactant intactId="EBI-3918971">
        <id>Q9Y680</id>
    </interactant>
    <interactant intactId="EBI-1045099">
        <id>Q9BW92</id>
        <label>TARS2</label>
    </interactant>
    <organismsDiffer>false</organismsDiffer>
    <experiments>3</experiments>
</comment>
<comment type="interaction">
    <interactant intactId="EBI-3918971">
        <id>Q9Y680</id>
    </interactant>
    <interactant intactId="EBI-726691">
        <id>Q8WY91</id>
        <label>THAP4</label>
    </interactant>
    <organismsDiffer>false</organismsDiffer>
    <experiments>3</experiments>
</comment>
<comment type="interaction">
    <interactant intactId="EBI-3918971">
        <id>Q9Y680</id>
    </interactant>
    <interactant intactId="EBI-311394">
        <id>Q9C0I4</id>
        <label>THSD7B</label>
    </interactant>
    <organismsDiffer>false</organismsDiffer>
    <experiments>3</experiments>
</comment>
<comment type="interaction">
    <interactant intactId="EBI-3918971">
        <id>Q9Y680</id>
    </interactant>
    <interactant intactId="EBI-7100456">
        <id>Q6UXF1</id>
        <label>TMEM108</label>
    </interactant>
    <organismsDiffer>false</organismsDiffer>
    <experiments>3</experiments>
</comment>
<comment type="interaction">
    <interactant intactId="EBI-3918971">
        <id>Q9Y680</id>
    </interactant>
    <interactant intactId="EBI-10171534">
        <id>A0PK00</id>
        <label>TMEM120B</label>
    </interactant>
    <organismsDiffer>false</organismsDiffer>
    <experiments>3</experiments>
</comment>
<comment type="interaction">
    <interactant intactId="EBI-3918971">
        <id>Q9Y680</id>
    </interactant>
    <interactant intactId="EBI-12195227">
        <id>Q8NBD8</id>
        <label>TMEM229B</label>
    </interactant>
    <organismsDiffer>false</organismsDiffer>
    <experiments>3</experiments>
</comment>
<comment type="interaction">
    <interactant intactId="EBI-3918971">
        <id>Q9Y680</id>
    </interactant>
    <interactant intactId="EBI-11528917">
        <id>Q8WW34-2</id>
        <label>TMEM239</label>
    </interactant>
    <organismsDiffer>false</organismsDiffer>
    <experiments>3</experiments>
</comment>
<comment type="interaction">
    <interactant intactId="EBI-3918971">
        <id>Q9Y680</id>
    </interactant>
    <interactant intactId="EBI-3922833">
        <id>Q969K7</id>
        <label>TMEM54</label>
    </interactant>
    <organismsDiffer>false</organismsDiffer>
    <experiments>3</experiments>
</comment>
<comment type="interaction">
    <interactant intactId="EBI-3918971">
        <id>Q9Y680</id>
    </interactant>
    <interactant intactId="EBI-12015604">
        <id>Q8N2M4</id>
        <label>TMEM86A</label>
    </interactant>
    <organismsDiffer>false</organismsDiffer>
    <experiments>3</experiments>
</comment>
<comment type="interaction">
    <interactant intactId="EBI-3918971">
        <id>Q9Y680</id>
    </interactant>
    <interactant intactId="EBI-2548832">
        <id>Q8N661</id>
        <label>TMEM86B</label>
    </interactant>
    <organismsDiffer>false</organismsDiffer>
    <experiments>3</experiments>
</comment>
<comment type="interaction">
    <interactant intactId="EBI-3918971">
        <id>Q9Y680</id>
    </interactant>
    <interactant intactId="EBI-12111910">
        <id>Q5BJF2</id>
        <label>TMEM97</label>
    </interactant>
    <organismsDiffer>false</organismsDiffer>
    <experiments>3</experiments>
</comment>
<comment type="interaction">
    <interactant intactId="EBI-3918971">
        <id>Q9Y680</id>
    </interactant>
    <interactant intactId="EBI-11996766">
        <id>Q8N609</id>
        <label>TRAM1L1</label>
    </interactant>
    <organismsDiffer>false</organismsDiffer>
    <experiments>3</experiments>
</comment>
<comment type="interaction">
    <interactant intactId="EBI-3918971">
        <id>Q9Y680</id>
    </interactant>
    <interactant intactId="EBI-3914288">
        <id>O60636</id>
        <label>TSPAN2</label>
    </interactant>
    <organismsDiffer>false</organismsDiffer>
    <experiments>3</experiments>
</comment>
<comment type="interaction">
    <interactant intactId="EBI-3918971">
        <id>Q9Y680</id>
    </interactant>
    <interactant intactId="EBI-10210710">
        <id>P49638</id>
        <label>TTPA</label>
    </interactant>
    <organismsDiffer>false</organismsDiffer>
    <experiments>3</experiments>
</comment>
<comment type="interaction">
    <interactant intactId="EBI-3918971">
        <id>Q9Y680</id>
    </interactant>
    <interactant intactId="EBI-2564581">
        <id>O95881</id>
        <label>TXNDC12</label>
    </interactant>
    <organismsDiffer>false</organismsDiffer>
    <experiments>3</experiments>
</comment>
<comment type="interaction">
    <interactant intactId="EBI-3918971">
        <id>Q9Y680</id>
    </interactant>
    <interactant intactId="EBI-2819725">
        <id>Q9Y5Z9</id>
        <label>UBIAD1</label>
    </interactant>
    <organismsDiffer>false</organismsDiffer>
    <experiments>3</experiments>
</comment>
<comment type="interaction">
    <interactant intactId="EBI-3918971">
        <id>Q9Y680</id>
    </interactant>
    <interactant intactId="EBI-12237619">
        <id>O75841</id>
        <label>UPK1B</label>
    </interactant>
    <organismsDiffer>false</organismsDiffer>
    <experiments>3</experiments>
</comment>
<comment type="interaction">
    <interactant intactId="EBI-3918971">
        <id>Q9Y680</id>
    </interactant>
    <interactant intactId="EBI-4311759">
        <id>Q8IW00</id>
        <label>VSTM4</label>
    </interactant>
    <organismsDiffer>false</organismsDiffer>
    <experiments>3</experiments>
</comment>
<comment type="interaction">
    <interactant intactId="EBI-3918971">
        <id>Q9Y680</id>
    </interactant>
    <interactant intactId="EBI-723529">
        <id>Q14508</id>
        <label>WFDC2</label>
    </interactant>
    <organismsDiffer>false</organismsDiffer>
    <experiments>4</experiments>
</comment>
<comment type="interaction">
    <interactant intactId="EBI-3918971">
        <id>Q9Y680</id>
    </interactant>
    <interactant intactId="EBI-12205107">
        <id>Q9Y4P8-4</id>
        <label>WIPI2</label>
    </interactant>
    <organismsDiffer>false</organismsDiffer>
    <experiments>3</experiments>
</comment>
<comment type="interaction">
    <interactant intactId="EBI-3918971">
        <id>Q9Y680</id>
    </interactant>
    <interactant intactId="EBI-751210">
        <id>Q96EC8</id>
        <label>YIPF6</label>
    </interactant>
    <organismsDiffer>false</organismsDiffer>
    <experiments>3</experiments>
</comment>
<comment type="interaction">
    <interactant intactId="EBI-3918971">
        <id>Q9Y680</id>
    </interactant>
    <interactant intactId="EBI-718439">
        <id>O95159</id>
        <label>ZFPL1</label>
    </interactant>
    <organismsDiffer>false</organismsDiffer>
    <experiments>3</experiments>
</comment>
<comment type="subcellular location">
    <subcellularLocation>
        <location evidence="5">Endoplasmic reticulum lumen</location>
    </subcellularLocation>
</comment>
<comment type="alternative products">
    <event type="alternative splicing"/>
    <isoform>
        <id>Q9Y680-2</id>
        <name>2</name>
        <sequence type="displayed"/>
    </isoform>
    <isoform>
        <id>Q9Y680-3</id>
        <name>3</name>
        <sequence type="described" ref="VSP_041018"/>
    </isoform>
    <isoform>
        <id>Q9Y680-1</id>
        <name>1</name>
        <sequence type="described" ref="VSP_059387 VSP_059388"/>
    </isoform>
</comment>
<comment type="PTM">
    <text evidence="1">Glycosylated.</text>
</comment>
<comment type="miscellaneous">
    <text evidence="1">Binds calcium.</text>
</comment>
<comment type="miscellaneous">
    <molecule>Isoform 1</molecule>
    <text evidence="9">May be produced at very low levels due to a premature stop codon in the mRNA, leading to nonsense-mediated mRNA decay.</text>
</comment>
<comment type="sequence caution" evidence="9">
    <conflict type="frameshift">
        <sequence resource="EMBL-CDS" id="AAD43015"/>
    </conflict>
</comment>
<name>FKBP7_HUMAN</name>
<evidence type="ECO:0000250" key="1"/>
<evidence type="ECO:0000255" key="2"/>
<evidence type="ECO:0000255" key="3">
    <source>
        <dbReference type="PROSITE-ProRule" id="PRU00277"/>
    </source>
</evidence>
<evidence type="ECO:0000255" key="4">
    <source>
        <dbReference type="PROSITE-ProRule" id="PRU00448"/>
    </source>
</evidence>
<evidence type="ECO:0000255" key="5">
    <source>
        <dbReference type="PROSITE-ProRule" id="PRU10138"/>
    </source>
</evidence>
<evidence type="ECO:0000256" key="6">
    <source>
        <dbReference type="SAM" id="MobiDB-lite"/>
    </source>
</evidence>
<evidence type="ECO:0000303" key="7">
    <source>
    </source>
</evidence>
<evidence type="ECO:0000303" key="8">
    <source ref="5"/>
</evidence>
<evidence type="ECO:0000305" key="9"/>
<organism>
    <name type="scientific">Homo sapiens</name>
    <name type="common">Human</name>
    <dbReference type="NCBI Taxonomy" id="9606"/>
    <lineage>
        <taxon>Eukaryota</taxon>
        <taxon>Metazoa</taxon>
        <taxon>Chordata</taxon>
        <taxon>Craniata</taxon>
        <taxon>Vertebrata</taxon>
        <taxon>Euteleostomi</taxon>
        <taxon>Mammalia</taxon>
        <taxon>Eutheria</taxon>
        <taxon>Euarchontoglires</taxon>
        <taxon>Primates</taxon>
        <taxon>Haplorrhini</taxon>
        <taxon>Catarrhini</taxon>
        <taxon>Hominidae</taxon>
        <taxon>Homo</taxon>
    </lineage>
</organism>
<sequence>MPKTMHFLFRFIVFFYLWGLFTAQRQKKEESTEEVKIEVLHRPENCSKTSKKGDLLNAHYDGYLAKDGSKFYCSRTQNEGHPKWFVLGVGQVIKGLDIAMTDMCPGEKRKVVIPPSFAYGKEGYAEGKIPPDATLIFEIELYAVTKGPRSIETFKQIDMDNDRQLSKAEINLYLQREFEKDEKPRDKSYQDAVLEDIFKKNDHDGDGFISPKEYNVYQHDEL</sequence>
<keyword id="KW-0025">Alternative splicing</keyword>
<keyword id="KW-0106">Calcium</keyword>
<keyword id="KW-0256">Endoplasmic reticulum</keyword>
<keyword id="KW-0325">Glycoprotein</keyword>
<keyword id="KW-0413">Isomerase</keyword>
<keyword id="KW-0479">Metal-binding</keyword>
<keyword id="KW-1267">Proteomics identification</keyword>
<keyword id="KW-1185">Reference proteome</keyword>
<keyword id="KW-0677">Repeat</keyword>
<keyword id="KW-0697">Rotamase</keyword>
<keyword id="KW-0732">Signal</keyword>